<name>MZT1_MOUSE</name>
<proteinExistence type="evidence at protein level"/>
<reference key="1">
    <citation type="journal article" date="2005" name="Science">
        <title>The transcriptional landscape of the mammalian genome.</title>
        <authorList>
            <person name="Carninci P."/>
            <person name="Kasukawa T."/>
            <person name="Katayama S."/>
            <person name="Gough J."/>
            <person name="Frith M.C."/>
            <person name="Maeda N."/>
            <person name="Oyama R."/>
            <person name="Ravasi T."/>
            <person name="Lenhard B."/>
            <person name="Wells C."/>
            <person name="Kodzius R."/>
            <person name="Shimokawa K."/>
            <person name="Bajic V.B."/>
            <person name="Brenner S.E."/>
            <person name="Batalov S."/>
            <person name="Forrest A.R."/>
            <person name="Zavolan M."/>
            <person name="Davis M.J."/>
            <person name="Wilming L.G."/>
            <person name="Aidinis V."/>
            <person name="Allen J.E."/>
            <person name="Ambesi-Impiombato A."/>
            <person name="Apweiler R."/>
            <person name="Aturaliya R.N."/>
            <person name="Bailey T.L."/>
            <person name="Bansal M."/>
            <person name="Baxter L."/>
            <person name="Beisel K.W."/>
            <person name="Bersano T."/>
            <person name="Bono H."/>
            <person name="Chalk A.M."/>
            <person name="Chiu K.P."/>
            <person name="Choudhary V."/>
            <person name="Christoffels A."/>
            <person name="Clutterbuck D.R."/>
            <person name="Crowe M.L."/>
            <person name="Dalla E."/>
            <person name="Dalrymple B.P."/>
            <person name="de Bono B."/>
            <person name="Della Gatta G."/>
            <person name="di Bernardo D."/>
            <person name="Down T."/>
            <person name="Engstrom P."/>
            <person name="Fagiolini M."/>
            <person name="Faulkner G."/>
            <person name="Fletcher C.F."/>
            <person name="Fukushima T."/>
            <person name="Furuno M."/>
            <person name="Futaki S."/>
            <person name="Gariboldi M."/>
            <person name="Georgii-Hemming P."/>
            <person name="Gingeras T.R."/>
            <person name="Gojobori T."/>
            <person name="Green R.E."/>
            <person name="Gustincich S."/>
            <person name="Harbers M."/>
            <person name="Hayashi Y."/>
            <person name="Hensch T.K."/>
            <person name="Hirokawa N."/>
            <person name="Hill D."/>
            <person name="Huminiecki L."/>
            <person name="Iacono M."/>
            <person name="Ikeo K."/>
            <person name="Iwama A."/>
            <person name="Ishikawa T."/>
            <person name="Jakt M."/>
            <person name="Kanapin A."/>
            <person name="Katoh M."/>
            <person name="Kawasawa Y."/>
            <person name="Kelso J."/>
            <person name="Kitamura H."/>
            <person name="Kitano H."/>
            <person name="Kollias G."/>
            <person name="Krishnan S.P."/>
            <person name="Kruger A."/>
            <person name="Kummerfeld S.K."/>
            <person name="Kurochkin I.V."/>
            <person name="Lareau L.F."/>
            <person name="Lazarevic D."/>
            <person name="Lipovich L."/>
            <person name="Liu J."/>
            <person name="Liuni S."/>
            <person name="McWilliam S."/>
            <person name="Madan Babu M."/>
            <person name="Madera M."/>
            <person name="Marchionni L."/>
            <person name="Matsuda H."/>
            <person name="Matsuzawa S."/>
            <person name="Miki H."/>
            <person name="Mignone F."/>
            <person name="Miyake S."/>
            <person name="Morris K."/>
            <person name="Mottagui-Tabar S."/>
            <person name="Mulder N."/>
            <person name="Nakano N."/>
            <person name="Nakauchi H."/>
            <person name="Ng P."/>
            <person name="Nilsson R."/>
            <person name="Nishiguchi S."/>
            <person name="Nishikawa S."/>
            <person name="Nori F."/>
            <person name="Ohara O."/>
            <person name="Okazaki Y."/>
            <person name="Orlando V."/>
            <person name="Pang K.C."/>
            <person name="Pavan W.J."/>
            <person name="Pavesi G."/>
            <person name="Pesole G."/>
            <person name="Petrovsky N."/>
            <person name="Piazza S."/>
            <person name="Reed J."/>
            <person name="Reid J.F."/>
            <person name="Ring B.Z."/>
            <person name="Ringwald M."/>
            <person name="Rost B."/>
            <person name="Ruan Y."/>
            <person name="Salzberg S.L."/>
            <person name="Sandelin A."/>
            <person name="Schneider C."/>
            <person name="Schoenbach C."/>
            <person name="Sekiguchi K."/>
            <person name="Semple C.A."/>
            <person name="Seno S."/>
            <person name="Sessa L."/>
            <person name="Sheng Y."/>
            <person name="Shibata Y."/>
            <person name="Shimada H."/>
            <person name="Shimada K."/>
            <person name="Silva D."/>
            <person name="Sinclair B."/>
            <person name="Sperling S."/>
            <person name="Stupka E."/>
            <person name="Sugiura K."/>
            <person name="Sultana R."/>
            <person name="Takenaka Y."/>
            <person name="Taki K."/>
            <person name="Tammoja K."/>
            <person name="Tan S.L."/>
            <person name="Tang S."/>
            <person name="Taylor M.S."/>
            <person name="Tegner J."/>
            <person name="Teichmann S.A."/>
            <person name="Ueda H.R."/>
            <person name="van Nimwegen E."/>
            <person name="Verardo R."/>
            <person name="Wei C.L."/>
            <person name="Yagi K."/>
            <person name="Yamanishi H."/>
            <person name="Zabarovsky E."/>
            <person name="Zhu S."/>
            <person name="Zimmer A."/>
            <person name="Hide W."/>
            <person name="Bult C."/>
            <person name="Grimmond S.M."/>
            <person name="Teasdale R.D."/>
            <person name="Liu E.T."/>
            <person name="Brusic V."/>
            <person name="Quackenbush J."/>
            <person name="Wahlestedt C."/>
            <person name="Mattick J.S."/>
            <person name="Hume D.A."/>
            <person name="Kai C."/>
            <person name="Sasaki D."/>
            <person name="Tomaru Y."/>
            <person name="Fukuda S."/>
            <person name="Kanamori-Katayama M."/>
            <person name="Suzuki M."/>
            <person name="Aoki J."/>
            <person name="Arakawa T."/>
            <person name="Iida J."/>
            <person name="Imamura K."/>
            <person name="Itoh M."/>
            <person name="Kato T."/>
            <person name="Kawaji H."/>
            <person name="Kawagashira N."/>
            <person name="Kawashima T."/>
            <person name="Kojima M."/>
            <person name="Kondo S."/>
            <person name="Konno H."/>
            <person name="Nakano K."/>
            <person name="Ninomiya N."/>
            <person name="Nishio T."/>
            <person name="Okada M."/>
            <person name="Plessy C."/>
            <person name="Shibata K."/>
            <person name="Shiraki T."/>
            <person name="Suzuki S."/>
            <person name="Tagami M."/>
            <person name="Waki K."/>
            <person name="Watahiki A."/>
            <person name="Okamura-Oho Y."/>
            <person name="Suzuki H."/>
            <person name="Kawai J."/>
            <person name="Hayashizaki Y."/>
        </authorList>
    </citation>
    <scope>NUCLEOTIDE SEQUENCE [LARGE SCALE MRNA]</scope>
    <source>
        <strain>C57BL/6J</strain>
        <strain>DBA/2J</strain>
        <strain>NOD</strain>
        <tissue>Bone marrow</tissue>
        <tissue>Kidney</tissue>
        <tissue>Placenta</tissue>
    </source>
</reference>
<reference key="2">
    <citation type="journal article" date="2004" name="Genome Res.">
        <title>The status, quality, and expansion of the NIH full-length cDNA project: the Mammalian Gene Collection (MGC).</title>
        <authorList>
            <consortium name="The MGC Project Team"/>
        </authorList>
    </citation>
    <scope>NUCLEOTIDE SEQUENCE [LARGE SCALE MRNA]</scope>
    <source>
        <tissue>Brain</tissue>
    </source>
</reference>
<reference key="3">
    <citation type="journal article" date="2010" name="Cell">
        <title>A tissue-specific atlas of mouse protein phosphorylation and expression.</title>
        <authorList>
            <person name="Huttlin E.L."/>
            <person name="Jedrychowski M.P."/>
            <person name="Elias J.E."/>
            <person name="Goswami T."/>
            <person name="Rad R."/>
            <person name="Beausoleil S.A."/>
            <person name="Villen J."/>
            <person name="Haas W."/>
            <person name="Sowa M.E."/>
            <person name="Gygi S.P."/>
        </authorList>
    </citation>
    <scope>IDENTIFICATION BY MASS SPECTROMETRY [LARGE SCALE ANALYSIS]</scope>
    <source>
        <tissue>Testis</tissue>
    </source>
</reference>
<reference key="4">
    <citation type="journal article" date="2010" name="Science">
        <title>Systematic analysis of human protein complexes identifies chromosome segregation proteins.</title>
        <authorList>
            <person name="Hutchins J.R."/>
            <person name="Toyoda Y."/>
            <person name="Hegemann B."/>
            <person name="Poser I."/>
            <person name="Heriche J.K."/>
            <person name="Sykora M.M."/>
            <person name="Augsburg M."/>
            <person name="Hudecz O."/>
            <person name="Buschhorn B.A."/>
            <person name="Bulkescher J."/>
            <person name="Conrad C."/>
            <person name="Comartin D."/>
            <person name="Schleiffer A."/>
            <person name="Sarov M."/>
            <person name="Pozniakovsky A."/>
            <person name="Slabicki M.M."/>
            <person name="Schloissnig S."/>
            <person name="Steinmacher I."/>
            <person name="Leuschner M."/>
            <person name="Ssykor A."/>
            <person name="Lawo S."/>
            <person name="Pelletier L."/>
            <person name="Stark H."/>
            <person name="Nasmyth K."/>
            <person name="Ellenberg J."/>
            <person name="Durbin R."/>
            <person name="Buchholz F."/>
            <person name="Mechtler K."/>
            <person name="Hyman A.A."/>
            <person name="Peters J.M."/>
        </authorList>
    </citation>
    <scope>FUNCTION</scope>
    <scope>SUBCELLULAR LOCATION</scope>
    <scope>INTERACTION WITH TUBG1</scope>
</reference>
<organism>
    <name type="scientific">Mus musculus</name>
    <name type="common">Mouse</name>
    <dbReference type="NCBI Taxonomy" id="10090"/>
    <lineage>
        <taxon>Eukaryota</taxon>
        <taxon>Metazoa</taxon>
        <taxon>Chordata</taxon>
        <taxon>Craniata</taxon>
        <taxon>Vertebrata</taxon>
        <taxon>Euteleostomi</taxon>
        <taxon>Mammalia</taxon>
        <taxon>Eutheria</taxon>
        <taxon>Euarchontoglires</taxon>
        <taxon>Glires</taxon>
        <taxon>Rodentia</taxon>
        <taxon>Myomorpha</taxon>
        <taxon>Muroidea</taxon>
        <taxon>Muridae</taxon>
        <taxon>Murinae</taxon>
        <taxon>Mus</taxon>
        <taxon>Mus</taxon>
    </lineage>
</organism>
<protein>
    <recommendedName>
        <fullName>Mitotic-spindle organizing protein 1</fullName>
    </recommendedName>
    <alternativeName>
        <fullName>Mitotic-spindle organizing protein associated with a ring of gamma-tubulin 1</fullName>
    </alternativeName>
</protein>
<gene>
    <name type="primary">Mzt1</name>
    <name type="synonym">Mozart1</name>
</gene>
<sequence>MASGSGPGAAASANLNAVRETMDVLLEISRILNTGLDMETLSICVRLCEQGINPEALSSVIKELRKGTEALKAAENTS</sequence>
<evidence type="ECO:0000250" key="1">
    <source>
        <dbReference type="UniProtKB" id="Q08AG7"/>
    </source>
</evidence>
<evidence type="ECO:0000269" key="2">
    <source>
    </source>
</evidence>
<evidence type="ECO:0000305" key="3"/>
<accession>Q8BUR9</accession>
<comment type="function">
    <text evidence="1 2">Required for the recruitment and the assembly of the gamma-tubulin ring complex (gTuRC) at the centrosome (PubMed:20360068). The gTuRC regulates the minus-end nucleation of alpha-beta tubulin heterodimers that grow into microtubule protafilaments, a critical step in centrosome duplication and spindle formation (By similarity).</text>
</comment>
<comment type="subunit">
    <text evidence="1 2">Associates with the gamma-tubulin ring complex (gTuRC) consisting of TUBGCP2, TUBGCP3, TUBGCP4, TUBGCP5 and TUBGCP6 and gamma-tubulin TUBG1 or TUBG2; within the complex, interacts with TUBGCP3 and TUBGCP6 to form a luminal bridge with actin that stabilizes the initial structure during complex assembly (By similarity). Interacts with TUBG1 (PubMed:20360068).</text>
</comment>
<comment type="subcellular location">
    <subcellularLocation>
        <location evidence="2">Cytoplasm</location>
        <location evidence="2">Cytoskeleton</location>
        <location evidence="2">Microtubule organizing center</location>
        <location evidence="2">Centrosome</location>
    </subcellularLocation>
    <subcellularLocation>
        <location evidence="2">Cytoplasm</location>
        <location evidence="2">Cytoskeleton</location>
        <location evidence="2">Spindle</location>
    </subcellularLocation>
</comment>
<comment type="similarity">
    <text evidence="3">Belongs to the MOZART1 family.</text>
</comment>
<feature type="initiator methionine" description="Removed" evidence="1">
    <location>
        <position position="1"/>
    </location>
</feature>
<feature type="chain" id="PRO_0000337016" description="Mitotic-spindle organizing protein 1">
    <location>
        <begin position="2"/>
        <end position="78"/>
    </location>
</feature>
<feature type="modified residue" description="N-acetylalanine" evidence="1">
    <location>
        <position position="2"/>
    </location>
</feature>
<keyword id="KW-0007">Acetylation</keyword>
<keyword id="KW-0963">Cytoplasm</keyword>
<keyword id="KW-0206">Cytoskeleton</keyword>
<keyword id="KW-1185">Reference proteome</keyword>
<dbReference type="EMBL" id="AK082817">
    <property type="protein sequence ID" value="BAC38633.1"/>
    <property type="molecule type" value="mRNA"/>
</dbReference>
<dbReference type="EMBL" id="AK150268">
    <property type="protein sequence ID" value="BAE29424.1"/>
    <property type="molecule type" value="mRNA"/>
</dbReference>
<dbReference type="EMBL" id="AK151232">
    <property type="protein sequence ID" value="BAE30224.1"/>
    <property type="molecule type" value="mRNA"/>
</dbReference>
<dbReference type="EMBL" id="AK151358">
    <property type="protein sequence ID" value="BAE30333.1"/>
    <property type="molecule type" value="mRNA"/>
</dbReference>
<dbReference type="EMBL" id="AK151819">
    <property type="protein sequence ID" value="BAE30716.1"/>
    <property type="molecule type" value="mRNA"/>
</dbReference>
<dbReference type="EMBL" id="AK160911">
    <property type="protein sequence ID" value="BAE36085.1"/>
    <property type="molecule type" value="mRNA"/>
</dbReference>
<dbReference type="EMBL" id="AK165605">
    <property type="protein sequence ID" value="BAE38289.1"/>
    <property type="molecule type" value="mRNA"/>
</dbReference>
<dbReference type="EMBL" id="AK168114">
    <property type="protein sequence ID" value="BAE40085.1"/>
    <property type="molecule type" value="mRNA"/>
</dbReference>
<dbReference type="EMBL" id="AK169036">
    <property type="protein sequence ID" value="BAE40827.1"/>
    <property type="molecule type" value="mRNA"/>
</dbReference>
<dbReference type="EMBL" id="AK170746">
    <property type="protein sequence ID" value="BAE41999.1"/>
    <property type="molecule type" value="mRNA"/>
</dbReference>
<dbReference type="EMBL" id="BC117005">
    <property type="protein sequence ID" value="AAI17006.1"/>
    <property type="molecule type" value="mRNA"/>
</dbReference>
<dbReference type="EMBL" id="BC117007">
    <property type="protein sequence ID" value="AAI17008.1"/>
    <property type="molecule type" value="mRNA"/>
</dbReference>
<dbReference type="CCDS" id="CCDS49554.1"/>
<dbReference type="RefSeq" id="NP_780454.1">
    <property type="nucleotide sequence ID" value="NM_175245.4"/>
</dbReference>
<dbReference type="SMR" id="Q8BUR9"/>
<dbReference type="BioGRID" id="218316">
    <property type="interactions" value="12"/>
</dbReference>
<dbReference type="FunCoup" id="Q8BUR9">
    <property type="interactions" value="630"/>
</dbReference>
<dbReference type="IntAct" id="Q8BUR9">
    <property type="interactions" value="11"/>
</dbReference>
<dbReference type="MINT" id="Q8BUR9"/>
<dbReference type="STRING" id="10090.ENSMUSP00000037557"/>
<dbReference type="PhosphoSitePlus" id="Q8BUR9"/>
<dbReference type="PaxDb" id="10090-ENSMUSP00000037557"/>
<dbReference type="PeptideAtlas" id="Q8BUR9"/>
<dbReference type="ProteomicsDB" id="287343"/>
<dbReference type="Pumba" id="Q8BUR9"/>
<dbReference type="Antibodypedia" id="71297">
    <property type="antibodies" value="27 antibodies from 12 providers"/>
</dbReference>
<dbReference type="DNASU" id="76789"/>
<dbReference type="Ensembl" id="ENSMUST00000042662.10">
    <property type="protein sequence ID" value="ENSMUSP00000037557.9"/>
    <property type="gene ID" value="ENSMUSG00000033186.10"/>
</dbReference>
<dbReference type="GeneID" id="76789"/>
<dbReference type="KEGG" id="mmu:76789"/>
<dbReference type="UCSC" id="uc007uuu.2">
    <property type="organism name" value="mouse"/>
</dbReference>
<dbReference type="AGR" id="MGI:1924039"/>
<dbReference type="CTD" id="440145"/>
<dbReference type="MGI" id="MGI:1924039">
    <property type="gene designation" value="Mzt1"/>
</dbReference>
<dbReference type="VEuPathDB" id="HostDB:ENSMUSG00000033186"/>
<dbReference type="eggNOG" id="ENOG502S6UI">
    <property type="taxonomic scope" value="Eukaryota"/>
</dbReference>
<dbReference type="GeneTree" id="ENSGT00390000005954"/>
<dbReference type="HOGENOM" id="CLU_160285_0_0_1"/>
<dbReference type="InParanoid" id="Q8BUR9"/>
<dbReference type="OMA" id="QNVSNNM"/>
<dbReference type="OrthoDB" id="48571at2759"/>
<dbReference type="PhylomeDB" id="Q8BUR9"/>
<dbReference type="TreeFam" id="TF328444"/>
<dbReference type="Reactome" id="R-MMU-380270">
    <property type="pathway name" value="Recruitment of mitotic centrosome proteins and complexes"/>
</dbReference>
<dbReference type="Reactome" id="R-MMU-380320">
    <property type="pathway name" value="Recruitment of NuMA to mitotic centrosomes"/>
</dbReference>
<dbReference type="BioGRID-ORCS" id="76789">
    <property type="hits" value="12 hits in 75 CRISPR screens"/>
</dbReference>
<dbReference type="ChiTaRS" id="Mzt1">
    <property type="organism name" value="mouse"/>
</dbReference>
<dbReference type="PRO" id="PR:Q8BUR9"/>
<dbReference type="Proteomes" id="UP000000589">
    <property type="component" value="Chromosome 14"/>
</dbReference>
<dbReference type="RNAct" id="Q8BUR9">
    <property type="molecule type" value="protein"/>
</dbReference>
<dbReference type="Bgee" id="ENSMUSG00000033186">
    <property type="expression patterns" value="Expressed in manus and 227 other cell types or tissues"/>
</dbReference>
<dbReference type="ExpressionAtlas" id="Q8BUR9">
    <property type="expression patterns" value="baseline and differential"/>
</dbReference>
<dbReference type="GO" id="GO:0005813">
    <property type="term" value="C:centrosome"/>
    <property type="evidence" value="ECO:0000250"/>
    <property type="project" value="UniProtKB"/>
</dbReference>
<dbReference type="GO" id="GO:0005737">
    <property type="term" value="C:cytoplasm"/>
    <property type="evidence" value="ECO:0007669"/>
    <property type="project" value="UniProtKB-KW"/>
</dbReference>
<dbReference type="GO" id="GO:0000931">
    <property type="term" value="C:gamma-tubulin ring complex"/>
    <property type="evidence" value="ECO:0000250"/>
    <property type="project" value="UniProtKB"/>
</dbReference>
<dbReference type="GO" id="GO:0005819">
    <property type="term" value="C:spindle"/>
    <property type="evidence" value="ECO:0000250"/>
    <property type="project" value="UniProtKB"/>
</dbReference>
<dbReference type="GO" id="GO:0033566">
    <property type="term" value="P:gamma-tubulin complex localization"/>
    <property type="evidence" value="ECO:0000250"/>
    <property type="project" value="UniProtKB"/>
</dbReference>
<dbReference type="InterPro" id="IPR022214">
    <property type="entry name" value="MZT1"/>
</dbReference>
<dbReference type="PANTHER" id="PTHR28520">
    <property type="entry name" value="MITOTIC-SPINDLE ORGANIZING PROTEIN 1"/>
    <property type="match status" value="1"/>
</dbReference>
<dbReference type="PANTHER" id="PTHR28520:SF2">
    <property type="entry name" value="MITOTIC-SPINDLE ORGANIZING PROTEIN 1"/>
    <property type="match status" value="1"/>
</dbReference>
<dbReference type="Pfam" id="PF12554">
    <property type="entry name" value="MOZART1"/>
    <property type="match status" value="1"/>
</dbReference>